<name>HCP_ECOSE</name>
<gene>
    <name evidence="1" type="primary">hcp</name>
    <name type="ordered locus">ECSE_0931</name>
</gene>
<comment type="function">
    <text evidence="1">Catalyzes the reduction of hydroxylamine to form NH(3) and H(2)O.</text>
</comment>
<comment type="catalytic activity">
    <reaction evidence="1">
        <text>A + NH4(+) + H2O = hydroxylamine + AH2 + H(+)</text>
        <dbReference type="Rhea" id="RHEA:22052"/>
        <dbReference type="ChEBI" id="CHEBI:13193"/>
        <dbReference type="ChEBI" id="CHEBI:15377"/>
        <dbReference type="ChEBI" id="CHEBI:15378"/>
        <dbReference type="ChEBI" id="CHEBI:15429"/>
        <dbReference type="ChEBI" id="CHEBI:17499"/>
        <dbReference type="ChEBI" id="CHEBI:28938"/>
        <dbReference type="EC" id="1.7.99.1"/>
    </reaction>
</comment>
<comment type="cofactor">
    <cofactor evidence="1">
        <name>[2Fe-2S] cluster</name>
        <dbReference type="ChEBI" id="CHEBI:190135"/>
    </cofactor>
    <text evidence="1">Binds 1 [2Fe-2S] cluster.</text>
</comment>
<comment type="cofactor">
    <cofactor evidence="1">
        <name>hybrid [4Fe-2O-2S] cluster</name>
        <dbReference type="ChEBI" id="CHEBI:60519"/>
    </cofactor>
    <text evidence="1">Binds 1 hybrid [4Fe-2O-2S] cluster.</text>
</comment>
<comment type="subcellular location">
    <subcellularLocation>
        <location evidence="1">Cytoplasm</location>
    </subcellularLocation>
</comment>
<comment type="similarity">
    <text evidence="1">Belongs to the HCP family.</text>
</comment>
<protein>
    <recommendedName>
        <fullName evidence="1">Hydroxylamine reductase</fullName>
        <ecNumber evidence="1">1.7.99.1</ecNumber>
    </recommendedName>
    <alternativeName>
        <fullName evidence="1">Hybrid-cluster protein</fullName>
        <shortName evidence="1">HCP</shortName>
    </alternativeName>
    <alternativeName>
        <fullName evidence="1">Prismane protein</fullName>
    </alternativeName>
</protein>
<dbReference type="EC" id="1.7.99.1" evidence="1"/>
<dbReference type="EMBL" id="AP009240">
    <property type="protein sequence ID" value="BAG76455.1"/>
    <property type="molecule type" value="Genomic_DNA"/>
</dbReference>
<dbReference type="RefSeq" id="WP_000458833.1">
    <property type="nucleotide sequence ID" value="NC_011415.1"/>
</dbReference>
<dbReference type="SMR" id="B6I8U4"/>
<dbReference type="KEGG" id="ecy:ECSE_0931"/>
<dbReference type="HOGENOM" id="CLU_038344_2_0_6"/>
<dbReference type="Proteomes" id="UP000008199">
    <property type="component" value="Chromosome"/>
</dbReference>
<dbReference type="GO" id="GO:0005737">
    <property type="term" value="C:cytoplasm"/>
    <property type="evidence" value="ECO:0007669"/>
    <property type="project" value="UniProtKB-SubCell"/>
</dbReference>
<dbReference type="GO" id="GO:0051537">
    <property type="term" value="F:2 iron, 2 sulfur cluster binding"/>
    <property type="evidence" value="ECO:0007669"/>
    <property type="project" value="UniProtKB-KW"/>
</dbReference>
<dbReference type="GO" id="GO:0050418">
    <property type="term" value="F:hydroxylamine reductase activity"/>
    <property type="evidence" value="ECO:0007669"/>
    <property type="project" value="UniProtKB-UniRule"/>
</dbReference>
<dbReference type="GO" id="GO:0046872">
    <property type="term" value="F:metal ion binding"/>
    <property type="evidence" value="ECO:0007669"/>
    <property type="project" value="UniProtKB-KW"/>
</dbReference>
<dbReference type="GO" id="GO:0004601">
    <property type="term" value="F:peroxidase activity"/>
    <property type="evidence" value="ECO:0007669"/>
    <property type="project" value="TreeGrafter"/>
</dbReference>
<dbReference type="GO" id="GO:0042542">
    <property type="term" value="P:response to hydrogen peroxide"/>
    <property type="evidence" value="ECO:0007669"/>
    <property type="project" value="TreeGrafter"/>
</dbReference>
<dbReference type="CDD" id="cd01914">
    <property type="entry name" value="HCP"/>
    <property type="match status" value="1"/>
</dbReference>
<dbReference type="FunFam" id="1.20.1270.20:FF:000001">
    <property type="entry name" value="Hydroxylamine reductase"/>
    <property type="match status" value="1"/>
</dbReference>
<dbReference type="FunFam" id="1.20.1270.20:FF:000002">
    <property type="entry name" value="Hydroxylamine reductase"/>
    <property type="match status" value="1"/>
</dbReference>
<dbReference type="FunFam" id="3.40.50.2030:FF:000001">
    <property type="entry name" value="Hydroxylamine reductase"/>
    <property type="match status" value="1"/>
</dbReference>
<dbReference type="FunFam" id="3.40.50.2030:FF:000002">
    <property type="entry name" value="Hydroxylamine reductase"/>
    <property type="match status" value="1"/>
</dbReference>
<dbReference type="Gene3D" id="1.20.1270.20">
    <property type="match status" value="2"/>
</dbReference>
<dbReference type="Gene3D" id="3.40.50.2030">
    <property type="match status" value="2"/>
</dbReference>
<dbReference type="HAMAP" id="MF_00069">
    <property type="entry name" value="Hydroxylam_reduct"/>
    <property type="match status" value="1"/>
</dbReference>
<dbReference type="InterPro" id="IPR004137">
    <property type="entry name" value="HCP/CODH"/>
</dbReference>
<dbReference type="InterPro" id="IPR010048">
    <property type="entry name" value="Hydroxylam_reduct"/>
</dbReference>
<dbReference type="InterPro" id="IPR016099">
    <property type="entry name" value="Prismane-like_a/b-sand"/>
</dbReference>
<dbReference type="InterPro" id="IPR011254">
    <property type="entry name" value="Prismane-like_sf"/>
</dbReference>
<dbReference type="InterPro" id="IPR016100">
    <property type="entry name" value="Prismane_a-bundle"/>
</dbReference>
<dbReference type="NCBIfam" id="TIGR01703">
    <property type="entry name" value="hybrid_clust"/>
    <property type="match status" value="1"/>
</dbReference>
<dbReference type="NCBIfam" id="NF003658">
    <property type="entry name" value="PRK05290.1"/>
    <property type="match status" value="1"/>
</dbReference>
<dbReference type="PANTHER" id="PTHR30109">
    <property type="entry name" value="HYDROXYLAMINE REDUCTASE"/>
    <property type="match status" value="1"/>
</dbReference>
<dbReference type="PANTHER" id="PTHR30109:SF0">
    <property type="entry name" value="HYDROXYLAMINE REDUCTASE"/>
    <property type="match status" value="1"/>
</dbReference>
<dbReference type="Pfam" id="PF03063">
    <property type="entry name" value="Prismane"/>
    <property type="match status" value="1"/>
</dbReference>
<dbReference type="PIRSF" id="PIRSF000076">
    <property type="entry name" value="HCP"/>
    <property type="match status" value="1"/>
</dbReference>
<dbReference type="SUPFAM" id="SSF56821">
    <property type="entry name" value="Prismane protein-like"/>
    <property type="match status" value="1"/>
</dbReference>
<evidence type="ECO:0000255" key="1">
    <source>
        <dbReference type="HAMAP-Rule" id="MF_00069"/>
    </source>
</evidence>
<keyword id="KW-0001">2Fe-2S</keyword>
<keyword id="KW-0963">Cytoplasm</keyword>
<keyword id="KW-0408">Iron</keyword>
<keyword id="KW-0411">Iron-sulfur</keyword>
<keyword id="KW-0479">Metal-binding</keyword>
<keyword id="KW-0560">Oxidoreductase</keyword>
<organism>
    <name type="scientific">Escherichia coli (strain SE11)</name>
    <dbReference type="NCBI Taxonomy" id="409438"/>
    <lineage>
        <taxon>Bacteria</taxon>
        <taxon>Pseudomonadati</taxon>
        <taxon>Pseudomonadota</taxon>
        <taxon>Gammaproteobacteria</taxon>
        <taxon>Enterobacterales</taxon>
        <taxon>Enterobacteriaceae</taxon>
        <taxon>Escherichia</taxon>
    </lineage>
</organism>
<proteinExistence type="inferred from homology"/>
<reference key="1">
    <citation type="journal article" date="2008" name="DNA Res.">
        <title>Complete genome sequence and comparative analysis of the wild-type commensal Escherichia coli strain SE11 isolated from a healthy adult.</title>
        <authorList>
            <person name="Oshima K."/>
            <person name="Toh H."/>
            <person name="Ogura Y."/>
            <person name="Sasamoto H."/>
            <person name="Morita H."/>
            <person name="Park S.-H."/>
            <person name="Ooka T."/>
            <person name="Iyoda S."/>
            <person name="Taylor T.D."/>
            <person name="Hayashi T."/>
            <person name="Itoh K."/>
            <person name="Hattori M."/>
        </authorList>
    </citation>
    <scope>NUCLEOTIDE SEQUENCE [LARGE SCALE GENOMIC DNA]</scope>
    <source>
        <strain>SE11</strain>
    </source>
</reference>
<accession>B6I8U4</accession>
<feature type="chain" id="PRO_1000092337" description="Hydroxylamine reductase">
    <location>
        <begin position="1"/>
        <end position="550"/>
    </location>
</feature>
<feature type="binding site" evidence="1">
    <location>
        <position position="3"/>
    </location>
    <ligand>
        <name>[2Fe-2S] cluster</name>
        <dbReference type="ChEBI" id="CHEBI:190135"/>
    </ligand>
</feature>
<feature type="binding site" evidence="1">
    <location>
        <position position="6"/>
    </location>
    <ligand>
        <name>[2Fe-2S] cluster</name>
        <dbReference type="ChEBI" id="CHEBI:190135"/>
    </ligand>
</feature>
<feature type="binding site" evidence="1">
    <location>
        <position position="18"/>
    </location>
    <ligand>
        <name>[2Fe-2S] cluster</name>
        <dbReference type="ChEBI" id="CHEBI:190135"/>
    </ligand>
</feature>
<feature type="binding site" evidence="1">
    <location>
        <position position="25"/>
    </location>
    <ligand>
        <name>[2Fe-2S] cluster</name>
        <dbReference type="ChEBI" id="CHEBI:190135"/>
    </ligand>
</feature>
<feature type="binding site" evidence="1">
    <location>
        <position position="249"/>
    </location>
    <ligand>
        <name>hybrid [4Fe-2O-2S] cluster</name>
        <dbReference type="ChEBI" id="CHEBI:60519"/>
    </ligand>
</feature>
<feature type="binding site" evidence="1">
    <location>
        <position position="273"/>
    </location>
    <ligand>
        <name>hybrid [4Fe-2O-2S] cluster</name>
        <dbReference type="ChEBI" id="CHEBI:60519"/>
    </ligand>
</feature>
<feature type="binding site" evidence="1">
    <location>
        <position position="317"/>
    </location>
    <ligand>
        <name>hybrid [4Fe-2O-2S] cluster</name>
        <dbReference type="ChEBI" id="CHEBI:60519"/>
    </ligand>
</feature>
<feature type="binding site" description="via persulfide group" evidence="1">
    <location>
        <position position="405"/>
    </location>
    <ligand>
        <name>hybrid [4Fe-2O-2S] cluster</name>
        <dbReference type="ChEBI" id="CHEBI:60519"/>
    </ligand>
</feature>
<feature type="binding site" evidence="1">
    <location>
        <position position="433"/>
    </location>
    <ligand>
        <name>hybrid [4Fe-2O-2S] cluster</name>
        <dbReference type="ChEBI" id="CHEBI:60519"/>
    </ligand>
</feature>
<feature type="binding site" evidence="1">
    <location>
        <position position="458"/>
    </location>
    <ligand>
        <name>hybrid [4Fe-2O-2S] cluster</name>
        <dbReference type="ChEBI" id="CHEBI:60519"/>
    </ligand>
</feature>
<feature type="binding site" evidence="1">
    <location>
        <position position="492"/>
    </location>
    <ligand>
        <name>hybrid [4Fe-2O-2S] cluster</name>
        <dbReference type="ChEBI" id="CHEBI:60519"/>
    </ligand>
</feature>
<feature type="binding site" evidence="1">
    <location>
        <position position="494"/>
    </location>
    <ligand>
        <name>hybrid [4Fe-2O-2S] cluster</name>
        <dbReference type="ChEBI" id="CHEBI:60519"/>
    </ligand>
</feature>
<feature type="modified residue" description="Cysteine persulfide" evidence="1">
    <location>
        <position position="405"/>
    </location>
</feature>
<sequence>MFCVQCEQTIRTPAGNGCSYAQGMCGKTAETSDLQDLLIAALQGLSAWAVKAREYGIINHDVDSFAPRAFFSTLTNVNFDSPRIVGYAREAIALREALKAQCLAVDANARVDNPMANLQLVSDDLGELQRQAAEFTPNKDKAAIGENILGLRLLCLYGLKGAAAYMEHAHVLGQYDNDIYAQYHKIMAWLGTWPADMNALLECSMEIGQMNFKVMSILDAGETGKYGHPTPTQVNVKATAGKCILISGHDLKDLYNLLEQTEGTGVNVYTHGEMLPAHGYPELRKFKHLVGNYGSGWQNQQVEFARFPGPIVMTSNCIIDPTVGAYDDRIWTRSIVGWPGVRHLDGDDFSAVITQAQQMAGFPYSEIPHLITVGFGRQTLLGAADTLIDLVSREKLRHIFLLGGCDGARGERHYFTDFATSVPDDCLILTLACGKYRFNKLEFGDIEGLPRLVDAGQCNDAYSAIILAVTLAEKLGCGVNDLPLSMVLSWFEQKAIVILLTLLSLGVKNIVTGPTAPGFLTPDLLAVLNEKFGLRSITTVEEDMKQLLSA</sequence>